<reference key="1">
    <citation type="journal article" date="2005" name="Nature">
        <title>Sequencing of Aspergillus nidulans and comparative analysis with A. fumigatus and A. oryzae.</title>
        <authorList>
            <person name="Galagan J.E."/>
            <person name="Calvo S.E."/>
            <person name="Cuomo C."/>
            <person name="Ma L.-J."/>
            <person name="Wortman J.R."/>
            <person name="Batzoglou S."/>
            <person name="Lee S.-I."/>
            <person name="Bastuerkmen M."/>
            <person name="Spevak C.C."/>
            <person name="Clutterbuck J."/>
            <person name="Kapitonov V."/>
            <person name="Jurka J."/>
            <person name="Scazzocchio C."/>
            <person name="Farman M.L."/>
            <person name="Butler J."/>
            <person name="Purcell S."/>
            <person name="Harris S."/>
            <person name="Braus G.H."/>
            <person name="Draht O."/>
            <person name="Busch S."/>
            <person name="D'Enfert C."/>
            <person name="Bouchier C."/>
            <person name="Goldman G.H."/>
            <person name="Bell-Pedersen D."/>
            <person name="Griffiths-Jones S."/>
            <person name="Doonan J.H."/>
            <person name="Yu J."/>
            <person name="Vienken K."/>
            <person name="Pain A."/>
            <person name="Freitag M."/>
            <person name="Selker E.U."/>
            <person name="Archer D.B."/>
            <person name="Penalva M.A."/>
            <person name="Oakley B.R."/>
            <person name="Momany M."/>
            <person name="Tanaka T."/>
            <person name="Kumagai T."/>
            <person name="Asai K."/>
            <person name="Machida M."/>
            <person name="Nierman W.C."/>
            <person name="Denning D.W."/>
            <person name="Caddick M.X."/>
            <person name="Hynes M."/>
            <person name="Paoletti M."/>
            <person name="Fischer R."/>
            <person name="Miller B.L."/>
            <person name="Dyer P.S."/>
            <person name="Sachs M.S."/>
            <person name="Osmani S.A."/>
            <person name="Birren B.W."/>
        </authorList>
    </citation>
    <scope>NUCLEOTIDE SEQUENCE [LARGE SCALE GENOMIC DNA]</scope>
    <source>
        <strain>FGSC A4 / ATCC 38163 / CBS 112.46 / NRRL 194 / M139</strain>
    </source>
</reference>
<reference key="2">
    <citation type="journal article" date="2009" name="Fungal Genet. Biol.">
        <title>The 2008 update of the Aspergillus nidulans genome annotation: a community effort.</title>
        <authorList>
            <person name="Wortman J.R."/>
            <person name="Gilsenan J.M."/>
            <person name="Joardar V."/>
            <person name="Deegan J."/>
            <person name="Clutterbuck J."/>
            <person name="Andersen M.R."/>
            <person name="Archer D."/>
            <person name="Bencina M."/>
            <person name="Braus G."/>
            <person name="Coutinho P."/>
            <person name="von Dohren H."/>
            <person name="Doonan J."/>
            <person name="Driessen A.J."/>
            <person name="Durek P."/>
            <person name="Espeso E."/>
            <person name="Fekete E."/>
            <person name="Flipphi M."/>
            <person name="Estrada C.G."/>
            <person name="Geysens S."/>
            <person name="Goldman G."/>
            <person name="de Groot P.W."/>
            <person name="Hansen K."/>
            <person name="Harris S.D."/>
            <person name="Heinekamp T."/>
            <person name="Helmstaedt K."/>
            <person name="Henrissat B."/>
            <person name="Hofmann G."/>
            <person name="Homan T."/>
            <person name="Horio T."/>
            <person name="Horiuchi H."/>
            <person name="James S."/>
            <person name="Jones M."/>
            <person name="Karaffa L."/>
            <person name="Karanyi Z."/>
            <person name="Kato M."/>
            <person name="Keller N."/>
            <person name="Kelly D.E."/>
            <person name="Kiel J.A."/>
            <person name="Kim J.M."/>
            <person name="van der Klei I.J."/>
            <person name="Klis F.M."/>
            <person name="Kovalchuk A."/>
            <person name="Krasevec N."/>
            <person name="Kubicek C.P."/>
            <person name="Liu B."/>
            <person name="Maccabe A."/>
            <person name="Meyer V."/>
            <person name="Mirabito P."/>
            <person name="Miskei M."/>
            <person name="Mos M."/>
            <person name="Mullins J."/>
            <person name="Nelson D.R."/>
            <person name="Nielsen J."/>
            <person name="Oakley B.R."/>
            <person name="Osmani S.A."/>
            <person name="Pakula T."/>
            <person name="Paszewski A."/>
            <person name="Paulsen I."/>
            <person name="Pilsyk S."/>
            <person name="Pocsi I."/>
            <person name="Punt P.J."/>
            <person name="Ram A.F."/>
            <person name="Ren Q."/>
            <person name="Robellet X."/>
            <person name="Robson G."/>
            <person name="Seiboth B."/>
            <person name="van Solingen P."/>
            <person name="Specht T."/>
            <person name="Sun J."/>
            <person name="Taheri-Talesh N."/>
            <person name="Takeshita N."/>
            <person name="Ussery D."/>
            <person name="vanKuyk P.A."/>
            <person name="Visser H."/>
            <person name="van de Vondervoort P.J."/>
            <person name="de Vries R.P."/>
            <person name="Walton J."/>
            <person name="Xiang X."/>
            <person name="Xiong Y."/>
            <person name="Zeng A.P."/>
            <person name="Brandt B.W."/>
            <person name="Cornell M.J."/>
            <person name="van den Hondel C.A."/>
            <person name="Visser J."/>
            <person name="Oliver S.G."/>
            <person name="Turner G."/>
        </authorList>
    </citation>
    <scope>GENOME REANNOTATION</scope>
    <source>
        <strain>FGSC A4 / ATCC 38163 / CBS 112.46 / NRRL 194 / M139</strain>
    </source>
</reference>
<reference key="3">
    <citation type="journal article" date="2011" name="J. Am. Chem. Soc.">
        <title>Genome-based deletion analysis reveals the prenyl xanthone biosynthesis pathway in Aspergillus nidulans.</title>
        <authorList>
            <person name="Sanchez J.F."/>
            <person name="Entwistle R."/>
            <person name="Hung J.H."/>
            <person name="Yaegashi J."/>
            <person name="Jain S."/>
            <person name="Chiang Y.M."/>
            <person name="Wang C.C."/>
            <person name="Oakley B.R."/>
        </authorList>
    </citation>
    <scope>FUNCTION</scope>
    <scope>DISRUPTION PHENOTYPE</scope>
    <scope>PATHWAY</scope>
</reference>
<reference key="4">
    <citation type="journal article" date="2012" name="ChemBioChem">
        <title>Genetic and biosynthetic studies of the fungal prenylated xanthone shamixanthone and related metabolites in Aspergillus spp. revisited.</title>
        <authorList>
            <person name="Simpson T.J."/>
        </authorList>
    </citation>
    <scope>FUNCTION</scope>
</reference>
<reference key="5">
    <citation type="journal article" date="2012" name="ChemBioChem">
        <title>New insights into the biosynthesis of prenylated xanthones: Xptb from Aspergillus nidulans catalyses an O-prenylation of xanthones.</title>
        <authorList>
            <person name="Pockrandt D."/>
            <person name="Ludwig L."/>
            <person name="Fan A."/>
            <person name="Koenig G.M."/>
            <person name="Li S.M."/>
        </authorList>
    </citation>
    <scope>FUNCTION</scope>
</reference>
<protein>
    <recommendedName>
        <fullName evidence="8">Dehydrogenase xptC</fullName>
        <ecNumber evidence="10">1.1.-.-</ecNumber>
    </recommendedName>
    <alternativeName>
        <fullName evidence="8">Prenyl xanthone synthesis protein C</fullName>
    </alternativeName>
</protein>
<feature type="signal peptide" evidence="3">
    <location>
        <begin position="1"/>
        <end position="18"/>
    </location>
</feature>
<feature type="chain" id="PRO_5010328443" description="Dehydrogenase xptC">
    <location>
        <begin position="19"/>
        <end position="622"/>
    </location>
</feature>
<feature type="binding site" evidence="1">
    <location>
        <begin position="47"/>
        <end position="48"/>
    </location>
    <ligand>
        <name>FAD</name>
        <dbReference type="ChEBI" id="CHEBI:57692"/>
    </ligand>
</feature>
<feature type="binding site" evidence="1">
    <location>
        <begin position="68"/>
        <end position="69"/>
    </location>
    <ligand>
        <name>FAD</name>
        <dbReference type="ChEBI" id="CHEBI:57692"/>
    </ligand>
</feature>
<feature type="binding site" evidence="1">
    <location>
        <begin position="123"/>
        <end position="126"/>
    </location>
    <ligand>
        <name>FAD</name>
        <dbReference type="ChEBI" id="CHEBI:57692"/>
    </ligand>
</feature>
<feature type="binding site" evidence="1">
    <location>
        <begin position="598"/>
        <end position="599"/>
    </location>
    <ligand>
        <name>FAD</name>
        <dbReference type="ChEBI" id="CHEBI:57692"/>
    </ligand>
</feature>
<feature type="glycosylation site" description="N-linked (GlcNAc...) asparagine" evidence="4">
    <location>
        <position position="160"/>
    </location>
</feature>
<feature type="glycosylation site" description="N-linked (GlcNAc...) asparagine" evidence="4">
    <location>
        <position position="173"/>
    </location>
</feature>
<feature type="glycosylation site" description="N-linked (GlcNAc...) asparagine" evidence="4">
    <location>
        <position position="357"/>
    </location>
</feature>
<feature type="glycosylation site" description="N-linked (GlcNAc...) asparagine" evidence="4">
    <location>
        <position position="364"/>
    </location>
</feature>
<feature type="glycosylation site" description="N-linked (GlcNAc...) asparagine" evidence="4">
    <location>
        <position position="480"/>
    </location>
</feature>
<organism>
    <name type="scientific">Emericella nidulans (strain FGSC A4 / ATCC 38163 / CBS 112.46 / NRRL 194 / M139)</name>
    <name type="common">Aspergillus nidulans</name>
    <dbReference type="NCBI Taxonomy" id="227321"/>
    <lineage>
        <taxon>Eukaryota</taxon>
        <taxon>Fungi</taxon>
        <taxon>Dikarya</taxon>
        <taxon>Ascomycota</taxon>
        <taxon>Pezizomycotina</taxon>
        <taxon>Eurotiomycetes</taxon>
        <taxon>Eurotiomycetidae</taxon>
        <taxon>Eurotiales</taxon>
        <taxon>Aspergillaceae</taxon>
        <taxon>Aspergillus</taxon>
        <taxon>Aspergillus subgen. Nidulantes</taxon>
    </lineage>
</organism>
<sequence>MAKLSVILLFRSLLLCGALTVSRHATLVTEREVQSSKYDFIVVGGGVSGLTVADRLTEIPDVSVLVIEAGPVDRGEDFVYVPGSYERDPYIWPGLTNEPSAELNNRVFDSVVARVAGGGSIVNAMIFLRGTALDFDGWESLGNHGWGWEGMLPYFIKSENFTRPTPELAHEGNITWDDSVRGHDGPVRYSYPNYIYPGLGRLYEAALHIGIQPRLDPNGGQNTGVFNQPFAIDAATWTRSSARRNHYDPAVSRPNYHFLSDTTVARVIFDGTRAVGVEYLPSRGGGISTAFAAKEVLVAAGALHTPQVLQLSGVGPRDLLEALNIPIISDLPGVGSNLQDQTTFPFVYTWDSAVTPNVTTFLTNTTWATEQRVLYDQHLPSVWTLTRPLAPKFAFLSYEDATANTAYASILDDAQARDPADSLPGDIHPTVLAGYAVQRQIMFNEFRDAGLAVGGMSWDTDANVQVFNVKPFSRGYVYINQTDPLANPVIDFRTASDPTDFQLHIALLHKQRELFNAPSLAALGPTEVVPGPAVQTDEDIIKLMREILQPSNGHQCCSAPMMPRELGGVLSPEMKVYGTTGLRVIDISHWPKELSGPPMASIYAAGEKAADIIKGEHGWLGN</sequence>
<evidence type="ECO:0000250" key="1">
    <source>
        <dbReference type="UniProtKB" id="E4QP00"/>
    </source>
</evidence>
<evidence type="ECO:0000250" key="2">
    <source>
        <dbReference type="UniProtKB" id="Q12062"/>
    </source>
</evidence>
<evidence type="ECO:0000255" key="3"/>
<evidence type="ECO:0000255" key="4">
    <source>
        <dbReference type="PROSITE-ProRule" id="PRU00498"/>
    </source>
</evidence>
<evidence type="ECO:0000269" key="5">
    <source>
    </source>
</evidence>
<evidence type="ECO:0000269" key="6">
    <source>
    </source>
</evidence>
<evidence type="ECO:0000269" key="7">
    <source>
    </source>
</evidence>
<evidence type="ECO:0000303" key="8">
    <source>
    </source>
</evidence>
<evidence type="ECO:0000305" key="9"/>
<evidence type="ECO:0000305" key="10">
    <source>
    </source>
</evidence>
<proteinExistence type="inferred from homology"/>
<comment type="function">
    <text evidence="5 6 7">Dehydrogenase involved in the conversion of monodictyphenone to the prenyl xanthones such as emericellin, shamixanthone and epishamixanthone (PubMed:21351751, PubMed:22730213). Monodictyphenone is first converted to variecoxanthone A via a paeciloxanthone intermediate by the consecutive actions of the FAD-dependent monooxygenase mdpD and the xanthone prenyltransferase xptB (PubMed:21351751). XptB catalyzes regular O-prenylation at the hydroxy group of C-7 of the xanthone ring (PubMed:23150454). Variecoxanthone A is further prenylated to emericellin by xptA before being reduced to shamixanthone and epishamixanthone by the dehydrogenase xptC (PubMed:21351751).</text>
</comment>
<comment type="cofactor">
    <cofactor evidence="1">
        <name>FAD</name>
        <dbReference type="ChEBI" id="CHEBI:57692"/>
    </cofactor>
</comment>
<comment type="pathway">
    <text evidence="5">Secondary metabolite biosynthesis.</text>
</comment>
<comment type="subunit">
    <text evidence="2">Homodimer.</text>
</comment>
<comment type="disruption phenotype">
    <text evidence="5">Impairs the production of the xanthones shamixanthone and epishamixanthone; and accumulates variecoxanthone A and emericellin (PubMed:21351751).</text>
</comment>
<comment type="similarity">
    <text evidence="9">Belongs to the GMC oxidoreductase family.</text>
</comment>
<dbReference type="EC" id="1.1.-.-" evidence="10"/>
<dbReference type="EMBL" id="BN001302">
    <property type="protein sequence ID" value="CBF73676.1"/>
    <property type="molecule type" value="Genomic_DNA"/>
</dbReference>
<dbReference type="EMBL" id="AACD01000137">
    <property type="protein sequence ID" value="EAA58801.1"/>
    <property type="molecule type" value="Genomic_DNA"/>
</dbReference>
<dbReference type="RefSeq" id="XP_681267.1">
    <property type="nucleotide sequence ID" value="XM_676175.1"/>
</dbReference>
<dbReference type="SMR" id="Q5AUN2"/>
<dbReference type="STRING" id="227321.Q5AUN2"/>
<dbReference type="CAZy" id="AA3">
    <property type="family name" value="Auxiliary Activities 3"/>
</dbReference>
<dbReference type="GlyCosmos" id="Q5AUN2">
    <property type="glycosylation" value="5 sites, No reported glycans"/>
</dbReference>
<dbReference type="EnsemblFungi" id="CBF73676">
    <property type="protein sequence ID" value="CBF73676"/>
    <property type="gene ID" value="ANIA_07998"/>
</dbReference>
<dbReference type="KEGG" id="ani:ANIA_07998"/>
<dbReference type="VEuPathDB" id="FungiDB:AN7998"/>
<dbReference type="eggNOG" id="KOG1238">
    <property type="taxonomic scope" value="Eukaryota"/>
</dbReference>
<dbReference type="HOGENOM" id="CLU_002865_6_1_1"/>
<dbReference type="InParanoid" id="Q5AUN2"/>
<dbReference type="OMA" id="SNAHQCC"/>
<dbReference type="OrthoDB" id="269227at2759"/>
<dbReference type="Proteomes" id="UP000000560">
    <property type="component" value="Chromosome II"/>
</dbReference>
<dbReference type="GO" id="GO:0050660">
    <property type="term" value="F:flavin adenine dinucleotide binding"/>
    <property type="evidence" value="ECO:0007669"/>
    <property type="project" value="InterPro"/>
</dbReference>
<dbReference type="GO" id="GO:0016491">
    <property type="term" value="F:oxidoreductase activity"/>
    <property type="evidence" value="ECO:0000318"/>
    <property type="project" value="GO_Central"/>
</dbReference>
<dbReference type="GO" id="GO:0016614">
    <property type="term" value="F:oxidoreductase activity, acting on CH-OH group of donors"/>
    <property type="evidence" value="ECO:0007669"/>
    <property type="project" value="InterPro"/>
</dbReference>
<dbReference type="GO" id="GO:0044550">
    <property type="term" value="P:secondary metabolite biosynthetic process"/>
    <property type="evidence" value="ECO:0000318"/>
    <property type="project" value="GO_Central"/>
</dbReference>
<dbReference type="GO" id="GO:1900793">
    <property type="term" value="P:shamixanthone biosynthetic process"/>
    <property type="evidence" value="ECO:0000315"/>
    <property type="project" value="AspGD"/>
</dbReference>
<dbReference type="Gene3D" id="3.50.50.60">
    <property type="entry name" value="FAD/NAD(P)-binding domain"/>
    <property type="match status" value="1"/>
</dbReference>
<dbReference type="Gene3D" id="3.30.560.10">
    <property type="entry name" value="Glucose Oxidase, domain 3"/>
    <property type="match status" value="1"/>
</dbReference>
<dbReference type="InterPro" id="IPR036188">
    <property type="entry name" value="FAD/NAD-bd_sf"/>
</dbReference>
<dbReference type="InterPro" id="IPR012132">
    <property type="entry name" value="GMC_OxRdtase"/>
</dbReference>
<dbReference type="InterPro" id="IPR000172">
    <property type="entry name" value="GMC_OxRdtase_N"/>
</dbReference>
<dbReference type="InterPro" id="IPR007867">
    <property type="entry name" value="GMC_OxRtase_C"/>
</dbReference>
<dbReference type="PANTHER" id="PTHR11552:SF115">
    <property type="entry name" value="DEHYDROGENASE XPTC-RELATED"/>
    <property type="match status" value="1"/>
</dbReference>
<dbReference type="PANTHER" id="PTHR11552">
    <property type="entry name" value="GLUCOSE-METHANOL-CHOLINE GMC OXIDOREDUCTASE"/>
    <property type="match status" value="1"/>
</dbReference>
<dbReference type="Pfam" id="PF05199">
    <property type="entry name" value="GMC_oxred_C"/>
    <property type="match status" value="1"/>
</dbReference>
<dbReference type="Pfam" id="PF00732">
    <property type="entry name" value="GMC_oxred_N"/>
    <property type="match status" value="1"/>
</dbReference>
<dbReference type="PIRSF" id="PIRSF000137">
    <property type="entry name" value="Alcohol_oxidase"/>
    <property type="match status" value="1"/>
</dbReference>
<dbReference type="SUPFAM" id="SSF54373">
    <property type="entry name" value="FAD-linked reductases, C-terminal domain"/>
    <property type="match status" value="1"/>
</dbReference>
<dbReference type="SUPFAM" id="SSF51905">
    <property type="entry name" value="FAD/NAD(P)-binding domain"/>
    <property type="match status" value="1"/>
</dbReference>
<dbReference type="PROSITE" id="PS00624">
    <property type="entry name" value="GMC_OXRED_2"/>
    <property type="match status" value="1"/>
</dbReference>
<keyword id="KW-0274">FAD</keyword>
<keyword id="KW-0285">Flavoprotein</keyword>
<keyword id="KW-0325">Glycoprotein</keyword>
<keyword id="KW-0560">Oxidoreductase</keyword>
<keyword id="KW-1185">Reference proteome</keyword>
<keyword id="KW-0732">Signal</keyword>
<name>XPTC_EMENI</name>
<gene>
    <name evidence="8" type="primary">xptC</name>
    <name type="ORF">AN7998</name>
</gene>
<accession>Q5AUN2</accession>
<accession>A0A1U8QUL7</accession>
<accession>C8V5L9</accession>